<evidence type="ECO:0000250" key="1"/>
<evidence type="ECO:0000250" key="2">
    <source>
        <dbReference type="UniProtKB" id="P06225"/>
    </source>
</evidence>
<evidence type="ECO:0000305" key="3"/>
<reference key="1">
    <citation type="journal article" date="1998" name="J. Mol. Biol.">
        <title>Genome structure of mycobacteriophage D29: implications for phage evolution.</title>
        <authorList>
            <person name="Ford M.E."/>
            <person name="Sarkis G.J."/>
            <person name="Belanger A.E."/>
            <person name="Hendrix R.W."/>
            <person name="Hatfull G.F."/>
        </authorList>
    </citation>
    <scope>NUCLEOTIDE SEQUENCE [LARGE SCALE GENOMIC DNA]</scope>
</reference>
<organism>
    <name type="scientific">Mycobacterium phage D29</name>
    <name type="common">Mycobacteriophage D29</name>
    <dbReference type="NCBI Taxonomy" id="28369"/>
    <lineage>
        <taxon>Viruses</taxon>
        <taxon>Duplodnaviria</taxon>
        <taxon>Heunggongvirae</taxon>
        <taxon>Uroviricota</taxon>
        <taxon>Caudoviricetes</taxon>
        <taxon>Fromanvirus</taxon>
    </lineage>
</organism>
<keyword id="KW-0235">DNA replication</keyword>
<keyword id="KW-0238">DNA-binding</keyword>
<keyword id="KW-0239">DNA-directed DNA polymerase</keyword>
<keyword id="KW-0269">Exonuclease</keyword>
<keyword id="KW-0378">Hydrolase</keyword>
<keyword id="KW-0540">Nuclease</keyword>
<keyword id="KW-0548">Nucleotidyltransferase</keyword>
<keyword id="KW-1185">Reference proteome</keyword>
<keyword id="KW-0808">Transferase</keyword>
<keyword id="KW-1194">Viral DNA replication</keyword>
<feature type="chain" id="PRO_0000101263" description="DNA polymerase">
    <location>
        <begin position="1"/>
        <end position="607"/>
    </location>
</feature>
<feature type="domain" description="3'-5' exonuclease">
    <location>
        <begin position="1"/>
        <end position="213"/>
    </location>
</feature>
<feature type="region of interest" description="Polymerase" evidence="1">
    <location>
        <begin position="214"/>
        <end position="607"/>
    </location>
</feature>
<accession>O64235</accession>
<proteinExistence type="inferred from homology"/>
<dbReference type="EC" id="2.7.7.7"/>
<dbReference type="EC" id="3.1.11.-" evidence="2"/>
<dbReference type="EMBL" id="AF022214">
    <property type="protein sequence ID" value="AAC18485.1"/>
    <property type="molecule type" value="Genomic_DNA"/>
</dbReference>
<dbReference type="PIR" id="B72805">
    <property type="entry name" value="B72805"/>
</dbReference>
<dbReference type="RefSeq" id="NP_046860.1">
    <property type="nucleotide sequence ID" value="NC_001900.1"/>
</dbReference>
<dbReference type="SMR" id="O64235"/>
<dbReference type="GeneID" id="1261584"/>
<dbReference type="KEGG" id="vg:1261584"/>
<dbReference type="OrthoDB" id="14842at10239"/>
<dbReference type="Proteomes" id="UP000002131">
    <property type="component" value="Segment"/>
</dbReference>
<dbReference type="GO" id="GO:0008408">
    <property type="term" value="F:3'-5' exonuclease activity"/>
    <property type="evidence" value="ECO:0007669"/>
    <property type="project" value="InterPro"/>
</dbReference>
<dbReference type="GO" id="GO:0003677">
    <property type="term" value="F:DNA binding"/>
    <property type="evidence" value="ECO:0007669"/>
    <property type="project" value="UniProtKB-KW"/>
</dbReference>
<dbReference type="GO" id="GO:0003887">
    <property type="term" value="F:DNA-directed DNA polymerase activity"/>
    <property type="evidence" value="ECO:0007669"/>
    <property type="project" value="UniProtKB-KW"/>
</dbReference>
<dbReference type="GO" id="GO:0006261">
    <property type="term" value="P:DNA-templated DNA replication"/>
    <property type="evidence" value="ECO:0007669"/>
    <property type="project" value="InterPro"/>
</dbReference>
<dbReference type="GO" id="GO:0006302">
    <property type="term" value="P:double-strand break repair"/>
    <property type="evidence" value="ECO:0007669"/>
    <property type="project" value="TreeGrafter"/>
</dbReference>
<dbReference type="GO" id="GO:0039693">
    <property type="term" value="P:viral DNA genome replication"/>
    <property type="evidence" value="ECO:0007669"/>
    <property type="project" value="UniProtKB-KW"/>
</dbReference>
<dbReference type="Gene3D" id="3.30.70.370">
    <property type="match status" value="1"/>
</dbReference>
<dbReference type="Gene3D" id="1.10.150.20">
    <property type="entry name" value="5' to 3' exonuclease, C-terminal subdomain"/>
    <property type="match status" value="1"/>
</dbReference>
<dbReference type="Gene3D" id="3.30.420.10">
    <property type="entry name" value="Ribonuclease H-like superfamily/Ribonuclease H"/>
    <property type="match status" value="1"/>
</dbReference>
<dbReference type="InterPro" id="IPR002562">
    <property type="entry name" value="3'-5'_exonuclease_dom"/>
</dbReference>
<dbReference type="InterPro" id="IPR019760">
    <property type="entry name" value="DNA-dir_DNA_pol_A_CS"/>
</dbReference>
<dbReference type="InterPro" id="IPR001098">
    <property type="entry name" value="DNA-dir_DNA_pol_A_palm_dom"/>
</dbReference>
<dbReference type="InterPro" id="IPR043502">
    <property type="entry name" value="DNA/RNA_pol_sf"/>
</dbReference>
<dbReference type="InterPro" id="IPR002298">
    <property type="entry name" value="DNA_polymerase_A"/>
</dbReference>
<dbReference type="InterPro" id="IPR012337">
    <property type="entry name" value="RNaseH-like_sf"/>
</dbReference>
<dbReference type="InterPro" id="IPR036397">
    <property type="entry name" value="RNaseH_sf"/>
</dbReference>
<dbReference type="PANTHER" id="PTHR10133">
    <property type="entry name" value="DNA POLYMERASE I"/>
    <property type="match status" value="1"/>
</dbReference>
<dbReference type="PANTHER" id="PTHR10133:SF27">
    <property type="entry name" value="DNA POLYMERASE NU"/>
    <property type="match status" value="1"/>
</dbReference>
<dbReference type="Pfam" id="PF00476">
    <property type="entry name" value="DNA_pol_A"/>
    <property type="match status" value="1"/>
</dbReference>
<dbReference type="Pfam" id="PF01612">
    <property type="entry name" value="DNA_pol_A_exo1"/>
    <property type="match status" value="1"/>
</dbReference>
<dbReference type="PRINTS" id="PR00868">
    <property type="entry name" value="DNAPOLI"/>
</dbReference>
<dbReference type="SMART" id="SM00474">
    <property type="entry name" value="35EXOc"/>
    <property type="match status" value="1"/>
</dbReference>
<dbReference type="SMART" id="SM00482">
    <property type="entry name" value="POLAc"/>
    <property type="match status" value="1"/>
</dbReference>
<dbReference type="SUPFAM" id="SSF56672">
    <property type="entry name" value="DNA/RNA polymerases"/>
    <property type="match status" value="1"/>
</dbReference>
<dbReference type="SUPFAM" id="SSF53098">
    <property type="entry name" value="Ribonuclease H-like"/>
    <property type="match status" value="1"/>
</dbReference>
<dbReference type="PROSITE" id="PS00447">
    <property type="entry name" value="DNA_POLYMERASE_A"/>
    <property type="match status" value="1"/>
</dbReference>
<organismHost>
    <name type="scientific">Mycobacterium</name>
    <dbReference type="NCBI Taxonomy" id="1763"/>
</organismHost>
<sequence>MIELRHEVQGDLVTINVVEHPEDLDGFRDFIRAHQNCLAVDTETTGLDIYSADFRCRLVQFGTQTESWVLPIEDLEMLGREEVHEALDVLNKIVMQNASYDLQVLDRCFGIKMESLWPKILDTQILAKLVDPRPFGAGGFGHSLEELIAEFISKEQAENVKGLMAKLAKEHKTTKAKIWSTIDLYHPEYLTYAGMDTVFTARICSALAPLVPDVSRPLVPYEHKISEICSYIDRRGFLLDVEYSQQLADKWLGEQQVWEAVLLNEYGIEKVNATEDVAEAFEELGHKFTAFTDSGKRKVDKGFYADMIAAGGEKAHLAEMVQEAKKLGKWRTSWVQTFLDTRDSEDRCHTFVNPLQARTSRMSITGIPAQTLPASDWTVRRCFLADPGHVMASIDYQAQELRVLAALSGDRTMIQAFKDGADLHLMTARAAFGDHITKDDPERKYAKTVNFGRVYGGGANTVAEQTGISIETAKQVVDGFDKAYPGVTRYSRKLANEAKRNGYIINPMGRRLPVDRSRTYSALNYQIQSTSRDVTCKALIRLHEAGFTPYLRLPIHDEIVASLPAEKANWGAREIARLMAEEMGPVLIGTDPEVGKRSWGSLYGADY</sequence>
<comment type="function">
    <text evidence="2">Replicates viral genomic DNA. This polymerase possesses two enzymatic activities: DNA synthesis (polymerase) and an exonucleolytic activity that degrades single-stranded DNA in the 3'-5' direction.</text>
</comment>
<comment type="catalytic activity">
    <reaction>
        <text>DNA(n) + a 2'-deoxyribonucleoside 5'-triphosphate = DNA(n+1) + diphosphate</text>
        <dbReference type="Rhea" id="RHEA:22508"/>
        <dbReference type="Rhea" id="RHEA-COMP:17339"/>
        <dbReference type="Rhea" id="RHEA-COMP:17340"/>
        <dbReference type="ChEBI" id="CHEBI:33019"/>
        <dbReference type="ChEBI" id="CHEBI:61560"/>
        <dbReference type="ChEBI" id="CHEBI:173112"/>
        <dbReference type="EC" id="2.7.7.7"/>
    </reaction>
</comment>
<comment type="similarity">
    <text evidence="3">Belongs to the DNA polymerase type-A family.</text>
</comment>
<protein>
    <recommendedName>
        <fullName>DNA polymerase</fullName>
        <ecNumber>2.7.7.7</ecNumber>
        <ecNumber evidence="2">3.1.11.-</ecNumber>
    </recommendedName>
</protein>
<name>DPOL_BPMD2</name>
<gene>
    <name type="primary">44</name>
</gene>